<organism>
    <name type="scientific">Campylobacter jejuni subsp. jejuni serotype O:2 (strain ATCC 700819 / NCTC 11168)</name>
    <dbReference type="NCBI Taxonomy" id="192222"/>
    <lineage>
        <taxon>Bacteria</taxon>
        <taxon>Pseudomonadati</taxon>
        <taxon>Campylobacterota</taxon>
        <taxon>Epsilonproteobacteria</taxon>
        <taxon>Campylobacterales</taxon>
        <taxon>Campylobacteraceae</taxon>
        <taxon>Campylobacter</taxon>
    </lineage>
</organism>
<dbReference type="EC" id="2.4.2.29" evidence="1"/>
<dbReference type="EMBL" id="AL111168">
    <property type="protein sequence ID" value="CAL35128.1"/>
    <property type="molecule type" value="Genomic_DNA"/>
</dbReference>
<dbReference type="PIR" id="G81302">
    <property type="entry name" value="G81302"/>
</dbReference>
<dbReference type="RefSeq" id="WP_002853029.1">
    <property type="nucleotide sequence ID" value="NZ_SZUC01000001.1"/>
</dbReference>
<dbReference type="RefSeq" id="YP_002344405.1">
    <property type="nucleotide sequence ID" value="NC_002163.1"/>
</dbReference>
<dbReference type="SMR" id="Q9PNT0"/>
<dbReference type="IntAct" id="Q9PNT0">
    <property type="interactions" value="3"/>
</dbReference>
<dbReference type="STRING" id="192222.Cj1010"/>
<dbReference type="PaxDb" id="192222-Cj1010"/>
<dbReference type="EnsemblBacteria" id="CAL35128">
    <property type="protein sequence ID" value="CAL35128"/>
    <property type="gene ID" value="Cj1010"/>
</dbReference>
<dbReference type="GeneID" id="905301"/>
<dbReference type="KEGG" id="cje:Cj1010"/>
<dbReference type="PATRIC" id="fig|192222.6.peg.992"/>
<dbReference type="eggNOG" id="COG0343">
    <property type="taxonomic scope" value="Bacteria"/>
</dbReference>
<dbReference type="HOGENOM" id="CLU_022060_0_1_7"/>
<dbReference type="OrthoDB" id="9805417at2"/>
<dbReference type="UniPathway" id="UPA00392"/>
<dbReference type="Proteomes" id="UP000000799">
    <property type="component" value="Chromosome"/>
</dbReference>
<dbReference type="GO" id="GO:0005829">
    <property type="term" value="C:cytosol"/>
    <property type="evidence" value="ECO:0007669"/>
    <property type="project" value="TreeGrafter"/>
</dbReference>
<dbReference type="GO" id="GO:0046872">
    <property type="term" value="F:metal ion binding"/>
    <property type="evidence" value="ECO:0007669"/>
    <property type="project" value="UniProtKB-KW"/>
</dbReference>
<dbReference type="GO" id="GO:0008479">
    <property type="term" value="F:tRNA-guanosine(34) queuine transglycosylase activity"/>
    <property type="evidence" value="ECO:0007669"/>
    <property type="project" value="UniProtKB-UniRule"/>
</dbReference>
<dbReference type="GO" id="GO:0008616">
    <property type="term" value="P:queuosine biosynthetic process"/>
    <property type="evidence" value="ECO:0007669"/>
    <property type="project" value="UniProtKB-UniRule"/>
</dbReference>
<dbReference type="GO" id="GO:0101030">
    <property type="term" value="P:tRNA-guanine transglycosylation"/>
    <property type="evidence" value="ECO:0007669"/>
    <property type="project" value="InterPro"/>
</dbReference>
<dbReference type="Gene3D" id="3.20.20.105">
    <property type="entry name" value="Queuine tRNA-ribosyltransferase-like"/>
    <property type="match status" value="1"/>
</dbReference>
<dbReference type="HAMAP" id="MF_00168">
    <property type="entry name" value="Q_tRNA_Tgt"/>
    <property type="match status" value="1"/>
</dbReference>
<dbReference type="InterPro" id="IPR004803">
    <property type="entry name" value="TGT"/>
</dbReference>
<dbReference type="InterPro" id="IPR036511">
    <property type="entry name" value="TGT-like_sf"/>
</dbReference>
<dbReference type="InterPro" id="IPR002616">
    <property type="entry name" value="tRNA_ribo_trans-like"/>
</dbReference>
<dbReference type="NCBIfam" id="TIGR00430">
    <property type="entry name" value="Q_tRNA_tgt"/>
    <property type="match status" value="1"/>
</dbReference>
<dbReference type="NCBIfam" id="TIGR00449">
    <property type="entry name" value="tgt_general"/>
    <property type="match status" value="1"/>
</dbReference>
<dbReference type="PANTHER" id="PTHR43530">
    <property type="entry name" value="QUEUINE TRNA-RIBOSYLTRANSFERASE CATALYTIC SUBUNIT 1"/>
    <property type="match status" value="1"/>
</dbReference>
<dbReference type="PANTHER" id="PTHR43530:SF1">
    <property type="entry name" value="QUEUINE TRNA-RIBOSYLTRANSFERASE CATALYTIC SUBUNIT 1"/>
    <property type="match status" value="1"/>
</dbReference>
<dbReference type="Pfam" id="PF01702">
    <property type="entry name" value="TGT"/>
    <property type="match status" value="1"/>
</dbReference>
<dbReference type="SUPFAM" id="SSF51713">
    <property type="entry name" value="tRNA-guanine transglycosylase"/>
    <property type="match status" value="1"/>
</dbReference>
<evidence type="ECO:0000255" key="1">
    <source>
        <dbReference type="HAMAP-Rule" id="MF_00168"/>
    </source>
</evidence>
<sequence>MEFKLKHKDGMARVCEITTAHSTFLTPVFMPVGTVGAVKSLDANDMKNELDAKIILANTYHMYLRPTSKVVKDFGGLHGFTKFDRSFLTDSGGFQAFSLSKNSKHFNEGIEFKSHIDGSRHLFTPKSVLDTQYDFNSDIMMILDDLVALPATKERVKISVDRTILWAKEAITYHKNMQNKGIGIGQNIFGIIQGGTDYEERKRCALSLNEMPFDGLAIGGLSVGEENALMYETVQNLNPYLDENRPRYLMGVGTPEDLVENVERGVDMFDCVMPTRNARNGTFFTSFGKFNIKKAEFINDHEVIDSTCSCYTCRNFSRGYLNHLFKAKELTFFRLASLHNLHYYLELARKMREAILNNSFTQFKRNFYHLRGK</sequence>
<proteinExistence type="inferred from homology"/>
<accession>Q9PNT0</accession>
<accession>Q0P9P2</accession>
<name>TGT_CAMJE</name>
<gene>
    <name evidence="1" type="primary">tgt</name>
    <name type="ordered locus">Cj1010</name>
</gene>
<keyword id="KW-0328">Glycosyltransferase</keyword>
<keyword id="KW-0479">Metal-binding</keyword>
<keyword id="KW-0671">Queuosine biosynthesis</keyword>
<keyword id="KW-1185">Reference proteome</keyword>
<keyword id="KW-0808">Transferase</keyword>
<keyword id="KW-0819">tRNA processing</keyword>
<keyword id="KW-0862">Zinc</keyword>
<comment type="function">
    <text evidence="1">Catalyzes the base-exchange of a guanine (G) residue with the queuine precursor 7-aminomethyl-7-deazaguanine (PreQ1) at position 34 (anticodon wobble position) in tRNAs with GU(N) anticodons (tRNA-Asp, -Asn, -His and -Tyr). Catalysis occurs through a double-displacement mechanism. The nucleophile active site attacks the C1' of nucleotide 34 to detach the guanine base from the RNA, forming a covalent enzyme-RNA intermediate. The proton acceptor active site deprotonates the incoming PreQ1, allowing a nucleophilic attack on the C1' of the ribose to form the product. After dissociation, two additional enzymatic reactions on the tRNA convert PreQ1 to queuine (Q), resulting in the hypermodified nucleoside queuosine (7-(((4,5-cis-dihydroxy-2-cyclopenten-1-yl)amino)methyl)-7-deazaguanosine).</text>
</comment>
<comment type="catalytic activity">
    <reaction evidence="1">
        <text>7-aminomethyl-7-carbaguanine + guanosine(34) in tRNA = 7-aminomethyl-7-carbaguanosine(34) in tRNA + guanine</text>
        <dbReference type="Rhea" id="RHEA:24104"/>
        <dbReference type="Rhea" id="RHEA-COMP:10341"/>
        <dbReference type="Rhea" id="RHEA-COMP:10342"/>
        <dbReference type="ChEBI" id="CHEBI:16235"/>
        <dbReference type="ChEBI" id="CHEBI:58703"/>
        <dbReference type="ChEBI" id="CHEBI:74269"/>
        <dbReference type="ChEBI" id="CHEBI:82833"/>
        <dbReference type="EC" id="2.4.2.29"/>
    </reaction>
</comment>
<comment type="cofactor">
    <cofactor evidence="1">
        <name>Zn(2+)</name>
        <dbReference type="ChEBI" id="CHEBI:29105"/>
    </cofactor>
    <text evidence="1">Binds 1 zinc ion per subunit.</text>
</comment>
<comment type="pathway">
    <text evidence="1">tRNA modification; tRNA-queuosine biosynthesis.</text>
</comment>
<comment type="subunit">
    <text evidence="1">Homodimer. Within each dimer, one monomer is responsible for RNA recognition and catalysis, while the other monomer binds to the replacement base PreQ1.</text>
</comment>
<comment type="similarity">
    <text evidence="1">Belongs to the queuine tRNA-ribosyltransferase family.</text>
</comment>
<feature type="chain" id="PRO_0000135459" description="Queuine tRNA-ribosyltransferase">
    <location>
        <begin position="1"/>
        <end position="373"/>
    </location>
</feature>
<feature type="region of interest" description="RNA binding" evidence="1">
    <location>
        <begin position="251"/>
        <end position="257"/>
    </location>
</feature>
<feature type="region of interest" description="RNA binding; important for wobble base 34 recognition" evidence="1">
    <location>
        <begin position="275"/>
        <end position="279"/>
    </location>
</feature>
<feature type="active site" description="Proton acceptor" evidence="1">
    <location>
        <position position="90"/>
    </location>
</feature>
<feature type="active site" description="Nucleophile" evidence="1">
    <location>
        <position position="270"/>
    </location>
</feature>
<feature type="binding site" evidence="1">
    <location>
        <begin position="90"/>
        <end position="94"/>
    </location>
    <ligand>
        <name>substrate</name>
    </ligand>
</feature>
<feature type="binding site" evidence="1">
    <location>
        <position position="144"/>
    </location>
    <ligand>
        <name>substrate</name>
    </ligand>
</feature>
<feature type="binding site" evidence="1">
    <location>
        <position position="193"/>
    </location>
    <ligand>
        <name>substrate</name>
    </ligand>
</feature>
<feature type="binding site" evidence="1">
    <location>
        <position position="220"/>
    </location>
    <ligand>
        <name>substrate</name>
    </ligand>
</feature>
<feature type="binding site" evidence="1">
    <location>
        <position position="308"/>
    </location>
    <ligand>
        <name>Zn(2+)</name>
        <dbReference type="ChEBI" id="CHEBI:29105"/>
    </ligand>
</feature>
<feature type="binding site" evidence="1">
    <location>
        <position position="310"/>
    </location>
    <ligand>
        <name>Zn(2+)</name>
        <dbReference type="ChEBI" id="CHEBI:29105"/>
    </ligand>
</feature>
<feature type="binding site" evidence="1">
    <location>
        <position position="313"/>
    </location>
    <ligand>
        <name>Zn(2+)</name>
        <dbReference type="ChEBI" id="CHEBI:29105"/>
    </ligand>
</feature>
<feature type="binding site" evidence="1">
    <location>
        <position position="339"/>
    </location>
    <ligand>
        <name>Zn(2+)</name>
        <dbReference type="ChEBI" id="CHEBI:29105"/>
    </ligand>
</feature>
<protein>
    <recommendedName>
        <fullName evidence="1">Queuine tRNA-ribosyltransferase</fullName>
        <ecNumber evidence="1">2.4.2.29</ecNumber>
    </recommendedName>
    <alternativeName>
        <fullName evidence="1">Guanine insertion enzyme</fullName>
    </alternativeName>
    <alternativeName>
        <fullName evidence="1">tRNA-guanine transglycosylase</fullName>
    </alternativeName>
</protein>
<reference key="1">
    <citation type="journal article" date="2000" name="Nature">
        <title>The genome sequence of the food-borne pathogen Campylobacter jejuni reveals hypervariable sequences.</title>
        <authorList>
            <person name="Parkhill J."/>
            <person name="Wren B.W."/>
            <person name="Mungall K.L."/>
            <person name="Ketley J.M."/>
            <person name="Churcher C.M."/>
            <person name="Basham D."/>
            <person name="Chillingworth T."/>
            <person name="Davies R.M."/>
            <person name="Feltwell T."/>
            <person name="Holroyd S."/>
            <person name="Jagels K."/>
            <person name="Karlyshev A.V."/>
            <person name="Moule S."/>
            <person name="Pallen M.J."/>
            <person name="Penn C.W."/>
            <person name="Quail M.A."/>
            <person name="Rajandream M.A."/>
            <person name="Rutherford K.M."/>
            <person name="van Vliet A.H.M."/>
            <person name="Whitehead S."/>
            <person name="Barrell B.G."/>
        </authorList>
    </citation>
    <scope>NUCLEOTIDE SEQUENCE [LARGE SCALE GENOMIC DNA]</scope>
    <source>
        <strain>ATCC 700819 / NCTC 11168</strain>
    </source>
</reference>